<evidence type="ECO:0000255" key="1">
    <source>
        <dbReference type="HAMAP-Rule" id="MF_00173"/>
    </source>
</evidence>
<organism>
    <name type="scientific">Yersinia pestis bv. Antiqua (strain Nepal516)</name>
    <dbReference type="NCBI Taxonomy" id="377628"/>
    <lineage>
        <taxon>Bacteria</taxon>
        <taxon>Pseudomonadati</taxon>
        <taxon>Pseudomonadota</taxon>
        <taxon>Gammaproteobacteria</taxon>
        <taxon>Enterobacterales</taxon>
        <taxon>Yersiniaceae</taxon>
        <taxon>Yersinia</taxon>
    </lineage>
</organism>
<accession>Q1CEJ2</accession>
<accession>C4GXW9</accession>
<protein>
    <recommendedName>
        <fullName evidence="1">Arginine repressor</fullName>
    </recommendedName>
</protein>
<keyword id="KW-0028">Amino-acid biosynthesis</keyword>
<keyword id="KW-0055">Arginine biosynthesis</keyword>
<keyword id="KW-0963">Cytoplasm</keyword>
<keyword id="KW-0238">DNA-binding</keyword>
<keyword id="KW-0678">Repressor</keyword>
<keyword id="KW-0804">Transcription</keyword>
<keyword id="KW-0805">Transcription regulation</keyword>
<dbReference type="EMBL" id="CP000305">
    <property type="protein sequence ID" value="ABG19588.1"/>
    <property type="molecule type" value="Genomic_DNA"/>
</dbReference>
<dbReference type="EMBL" id="ACNQ01000017">
    <property type="protein sequence ID" value="EEO75769.1"/>
    <property type="molecule type" value="Genomic_DNA"/>
</dbReference>
<dbReference type="RefSeq" id="WP_002210173.1">
    <property type="nucleotide sequence ID" value="NZ_ACNQ01000017.1"/>
</dbReference>
<dbReference type="SMR" id="Q1CEJ2"/>
<dbReference type="GeneID" id="57975197"/>
<dbReference type="KEGG" id="ypn:YPN_3261"/>
<dbReference type="HOGENOM" id="CLU_097103_2_0_6"/>
<dbReference type="UniPathway" id="UPA00068"/>
<dbReference type="Proteomes" id="UP000008936">
    <property type="component" value="Chromosome"/>
</dbReference>
<dbReference type="GO" id="GO:0005737">
    <property type="term" value="C:cytoplasm"/>
    <property type="evidence" value="ECO:0007669"/>
    <property type="project" value="UniProtKB-SubCell"/>
</dbReference>
<dbReference type="GO" id="GO:0034618">
    <property type="term" value="F:arginine binding"/>
    <property type="evidence" value="ECO:0007669"/>
    <property type="project" value="InterPro"/>
</dbReference>
<dbReference type="GO" id="GO:0003677">
    <property type="term" value="F:DNA binding"/>
    <property type="evidence" value="ECO:0007669"/>
    <property type="project" value="UniProtKB-KW"/>
</dbReference>
<dbReference type="GO" id="GO:0003700">
    <property type="term" value="F:DNA-binding transcription factor activity"/>
    <property type="evidence" value="ECO:0007669"/>
    <property type="project" value="UniProtKB-UniRule"/>
</dbReference>
<dbReference type="GO" id="GO:0006526">
    <property type="term" value="P:L-arginine biosynthetic process"/>
    <property type="evidence" value="ECO:0007669"/>
    <property type="project" value="UniProtKB-UniPathway"/>
</dbReference>
<dbReference type="GO" id="GO:0051259">
    <property type="term" value="P:protein complex oligomerization"/>
    <property type="evidence" value="ECO:0007669"/>
    <property type="project" value="InterPro"/>
</dbReference>
<dbReference type="GO" id="GO:1900079">
    <property type="term" value="P:regulation of arginine biosynthetic process"/>
    <property type="evidence" value="ECO:0007669"/>
    <property type="project" value="UniProtKB-UniRule"/>
</dbReference>
<dbReference type="FunFam" id="1.10.10.10:FF:000074">
    <property type="entry name" value="Arginine repressor"/>
    <property type="match status" value="1"/>
</dbReference>
<dbReference type="FunFam" id="3.30.1360.40:FF:000004">
    <property type="entry name" value="Arginine repressor"/>
    <property type="match status" value="1"/>
</dbReference>
<dbReference type="Gene3D" id="3.30.1360.40">
    <property type="match status" value="1"/>
</dbReference>
<dbReference type="Gene3D" id="1.10.10.10">
    <property type="entry name" value="Winged helix-like DNA-binding domain superfamily/Winged helix DNA-binding domain"/>
    <property type="match status" value="1"/>
</dbReference>
<dbReference type="HAMAP" id="MF_00173">
    <property type="entry name" value="Arg_repressor"/>
    <property type="match status" value="1"/>
</dbReference>
<dbReference type="InterPro" id="IPR001669">
    <property type="entry name" value="Arg_repress"/>
</dbReference>
<dbReference type="InterPro" id="IPR020899">
    <property type="entry name" value="Arg_repress_C"/>
</dbReference>
<dbReference type="InterPro" id="IPR036251">
    <property type="entry name" value="Arg_repress_C_sf"/>
</dbReference>
<dbReference type="InterPro" id="IPR020900">
    <property type="entry name" value="Arg_repress_DNA-bd"/>
</dbReference>
<dbReference type="InterPro" id="IPR036388">
    <property type="entry name" value="WH-like_DNA-bd_sf"/>
</dbReference>
<dbReference type="InterPro" id="IPR036390">
    <property type="entry name" value="WH_DNA-bd_sf"/>
</dbReference>
<dbReference type="NCBIfam" id="TIGR01529">
    <property type="entry name" value="argR_whole"/>
    <property type="match status" value="1"/>
</dbReference>
<dbReference type="NCBIfam" id="NF003457">
    <property type="entry name" value="PRK05066.1"/>
    <property type="match status" value="1"/>
</dbReference>
<dbReference type="PANTHER" id="PTHR34471">
    <property type="entry name" value="ARGININE REPRESSOR"/>
    <property type="match status" value="1"/>
</dbReference>
<dbReference type="PANTHER" id="PTHR34471:SF1">
    <property type="entry name" value="ARGININE REPRESSOR"/>
    <property type="match status" value="1"/>
</dbReference>
<dbReference type="Pfam" id="PF01316">
    <property type="entry name" value="Arg_repressor"/>
    <property type="match status" value="1"/>
</dbReference>
<dbReference type="Pfam" id="PF02863">
    <property type="entry name" value="Arg_repressor_C"/>
    <property type="match status" value="1"/>
</dbReference>
<dbReference type="PRINTS" id="PR01467">
    <property type="entry name" value="ARGREPRESSOR"/>
</dbReference>
<dbReference type="SUPFAM" id="SSF55252">
    <property type="entry name" value="C-terminal domain of arginine repressor"/>
    <property type="match status" value="1"/>
</dbReference>
<dbReference type="SUPFAM" id="SSF46785">
    <property type="entry name" value="Winged helix' DNA-binding domain"/>
    <property type="match status" value="1"/>
</dbReference>
<name>ARGR_YERPN</name>
<proteinExistence type="inferred from homology"/>
<comment type="function">
    <text evidence="1">Regulates arginine biosynthesis genes.</text>
</comment>
<comment type="pathway">
    <text>Amino-acid biosynthesis; L-arginine biosynthesis [regulation].</text>
</comment>
<comment type="subcellular location">
    <subcellularLocation>
        <location evidence="1">Cytoplasm</location>
    </subcellularLocation>
</comment>
<comment type="similarity">
    <text evidence="1">Belongs to the ArgR family.</text>
</comment>
<gene>
    <name evidence="1" type="primary">argR</name>
    <name type="ordered locus">YPN_3261</name>
    <name type="ORF">YP516_3704</name>
</gene>
<reference key="1">
    <citation type="journal article" date="2006" name="J. Bacteriol.">
        <title>Complete genome sequence of Yersinia pestis strains Antiqua and Nepal516: evidence of gene reduction in an emerging pathogen.</title>
        <authorList>
            <person name="Chain P.S.G."/>
            <person name="Hu P."/>
            <person name="Malfatti S.A."/>
            <person name="Radnedge L."/>
            <person name="Larimer F."/>
            <person name="Vergez L.M."/>
            <person name="Worsham P."/>
            <person name="Chu M.C."/>
            <person name="Andersen G.L."/>
        </authorList>
    </citation>
    <scope>NUCLEOTIDE SEQUENCE [LARGE SCALE GENOMIC DNA]</scope>
    <source>
        <strain>Nepal516</strain>
    </source>
</reference>
<reference key="2">
    <citation type="submission" date="2009-04" db="EMBL/GenBank/DDBJ databases">
        <title>Yersinia pestis Nepal516A whole genome shotgun sequencing project.</title>
        <authorList>
            <person name="Plunkett G. III"/>
            <person name="Anderson B.D."/>
            <person name="Baumler D.J."/>
            <person name="Burland V."/>
            <person name="Cabot E.L."/>
            <person name="Glasner J.D."/>
            <person name="Mau B."/>
            <person name="Neeno-Eckwall E."/>
            <person name="Perna N.T."/>
            <person name="Munk A.C."/>
            <person name="Tapia R."/>
            <person name="Green L.D."/>
            <person name="Rogers Y.C."/>
            <person name="Detter J.C."/>
            <person name="Bruce D.C."/>
            <person name="Brettin T.S."/>
        </authorList>
    </citation>
    <scope>NUCLEOTIDE SEQUENCE [LARGE SCALE GENOMIC DNA]</scope>
    <source>
        <strain>Nepal516</strain>
    </source>
</reference>
<feature type="chain" id="PRO_1000023616" description="Arginine repressor">
    <location>
        <begin position="1"/>
        <end position="156"/>
    </location>
</feature>
<sequence>MRNPAKQEDLIKAFKALLKEEKFSSQGEIVLALQEEGFENINQSKVSRMLTKFGAVRTRNAKMEMVYCLPAELGVPTTSSPLKNLVLDVDYNDSVVVINTSPGAAQLIARLLDSLGKAEGILGSIAGDDTIFTTPARGFTVKQLHEAILRLFEQEL</sequence>